<accession>Q8DEZ1</accession>
<keyword id="KW-0067">ATP-binding</keyword>
<keyword id="KW-0143">Chaperone</keyword>
<keyword id="KW-0547">Nucleotide-binding</keyword>
<evidence type="ECO:0000250" key="1"/>
<evidence type="ECO:0000255" key="2">
    <source>
        <dbReference type="HAMAP-Rule" id="MF_00679"/>
    </source>
</evidence>
<feature type="chain" id="PRO_0000078654" description="Chaperone protein HscA homolog">
    <location>
        <begin position="1"/>
        <end position="617"/>
    </location>
</feature>
<dbReference type="EMBL" id="AE016795">
    <property type="protein sequence ID" value="AAO08957.1"/>
    <property type="molecule type" value="Genomic_DNA"/>
</dbReference>
<dbReference type="RefSeq" id="WP_011078533.1">
    <property type="nucleotide sequence ID" value="NC_004459.3"/>
</dbReference>
<dbReference type="SMR" id="Q8DEZ1"/>
<dbReference type="KEGG" id="vvu:VV1_0434"/>
<dbReference type="HOGENOM" id="CLU_005965_2_1_6"/>
<dbReference type="Proteomes" id="UP000002275">
    <property type="component" value="Chromosome 1"/>
</dbReference>
<dbReference type="GO" id="GO:0005524">
    <property type="term" value="F:ATP binding"/>
    <property type="evidence" value="ECO:0007669"/>
    <property type="project" value="UniProtKB-KW"/>
</dbReference>
<dbReference type="GO" id="GO:0016887">
    <property type="term" value="F:ATP hydrolysis activity"/>
    <property type="evidence" value="ECO:0007669"/>
    <property type="project" value="UniProtKB-UniRule"/>
</dbReference>
<dbReference type="GO" id="GO:0140662">
    <property type="term" value="F:ATP-dependent protein folding chaperone"/>
    <property type="evidence" value="ECO:0007669"/>
    <property type="project" value="InterPro"/>
</dbReference>
<dbReference type="GO" id="GO:0051082">
    <property type="term" value="F:unfolded protein binding"/>
    <property type="evidence" value="ECO:0007669"/>
    <property type="project" value="InterPro"/>
</dbReference>
<dbReference type="GO" id="GO:0016226">
    <property type="term" value="P:iron-sulfur cluster assembly"/>
    <property type="evidence" value="ECO:0007669"/>
    <property type="project" value="InterPro"/>
</dbReference>
<dbReference type="CDD" id="cd10236">
    <property type="entry name" value="ASKHA_NBD_HSP70_HscA"/>
    <property type="match status" value="1"/>
</dbReference>
<dbReference type="FunFam" id="3.30.420.40:FF:000046">
    <property type="entry name" value="Chaperone protein HscA"/>
    <property type="match status" value="1"/>
</dbReference>
<dbReference type="FunFam" id="2.60.34.10:FF:000005">
    <property type="entry name" value="Chaperone protein HscA homolog"/>
    <property type="match status" value="1"/>
</dbReference>
<dbReference type="FunFam" id="3.30.420.40:FF:000020">
    <property type="entry name" value="Chaperone protein HscA homolog"/>
    <property type="match status" value="1"/>
</dbReference>
<dbReference type="Gene3D" id="1.20.1270.10">
    <property type="match status" value="1"/>
</dbReference>
<dbReference type="Gene3D" id="3.30.420.40">
    <property type="match status" value="2"/>
</dbReference>
<dbReference type="Gene3D" id="3.90.640.10">
    <property type="entry name" value="Actin, Chain A, domain 4"/>
    <property type="match status" value="1"/>
</dbReference>
<dbReference type="Gene3D" id="2.60.34.10">
    <property type="entry name" value="Substrate Binding Domain Of DNAk, Chain A, domain 1"/>
    <property type="match status" value="1"/>
</dbReference>
<dbReference type="HAMAP" id="MF_00679">
    <property type="entry name" value="HscA"/>
    <property type="match status" value="1"/>
</dbReference>
<dbReference type="InterPro" id="IPR043129">
    <property type="entry name" value="ATPase_NBD"/>
</dbReference>
<dbReference type="InterPro" id="IPR018181">
    <property type="entry name" value="Heat_shock_70_CS"/>
</dbReference>
<dbReference type="InterPro" id="IPR042039">
    <property type="entry name" value="HscA_NBD"/>
</dbReference>
<dbReference type="InterPro" id="IPR029048">
    <property type="entry name" value="HSP70_C_sf"/>
</dbReference>
<dbReference type="InterPro" id="IPR029047">
    <property type="entry name" value="HSP70_peptide-bd_sf"/>
</dbReference>
<dbReference type="InterPro" id="IPR013126">
    <property type="entry name" value="Hsp_70_fam"/>
</dbReference>
<dbReference type="InterPro" id="IPR010236">
    <property type="entry name" value="ISC_FeS_clus_asmbl_HscA"/>
</dbReference>
<dbReference type="NCBIfam" id="TIGR01991">
    <property type="entry name" value="HscA"/>
    <property type="match status" value="1"/>
</dbReference>
<dbReference type="NCBIfam" id="NF003520">
    <property type="entry name" value="PRK05183.1"/>
    <property type="match status" value="1"/>
</dbReference>
<dbReference type="PANTHER" id="PTHR19375">
    <property type="entry name" value="HEAT SHOCK PROTEIN 70KDA"/>
    <property type="match status" value="1"/>
</dbReference>
<dbReference type="Pfam" id="PF00012">
    <property type="entry name" value="HSP70"/>
    <property type="match status" value="1"/>
</dbReference>
<dbReference type="PRINTS" id="PR00301">
    <property type="entry name" value="HEATSHOCK70"/>
</dbReference>
<dbReference type="SUPFAM" id="SSF53067">
    <property type="entry name" value="Actin-like ATPase domain"/>
    <property type="match status" value="2"/>
</dbReference>
<dbReference type="SUPFAM" id="SSF100934">
    <property type="entry name" value="Heat shock protein 70kD (HSP70), C-terminal subdomain"/>
    <property type="match status" value="1"/>
</dbReference>
<dbReference type="SUPFAM" id="SSF100920">
    <property type="entry name" value="Heat shock protein 70kD (HSP70), peptide-binding domain"/>
    <property type="match status" value="1"/>
</dbReference>
<dbReference type="PROSITE" id="PS00297">
    <property type="entry name" value="HSP70_1"/>
    <property type="match status" value="1"/>
</dbReference>
<dbReference type="PROSITE" id="PS00329">
    <property type="entry name" value="HSP70_2"/>
    <property type="match status" value="1"/>
</dbReference>
<comment type="function">
    <text evidence="1">Probable chaperone. Has a low intrinsic ATPase activity which is markedly stimulated by HscB (By similarity).</text>
</comment>
<comment type="similarity">
    <text evidence="2">Belongs to the heat shock protein 70 family.</text>
</comment>
<sequence length="617" mass="66095">MALLQIAEPGQSSAPHEHKRAAGIDLGTTNSLVASVRSGTADTLKDAQGRSLLPSIVNYANEEAIVGYEAKALSESQPQDTIISVKRLLGRSLTDIQTRYPSLPYRFKASENGLPVLQTTQGDKNPIEVSADILKVLAKRAEESLGGELSGVVITVPAYFDDAQRAGTKDAAKLAGLHVLRLLNEPTAAAIAYGLDSGQEGVIAVYDLGGGTFDISILRLSKGVFEVLATGGDSALGGDDFDHLLADFLAEQAGLETPLSAEKNRTLLNIATATKIAFSEQDSVEVEVFGWKGVVTREQFEELIRPLVKKTLMSCRRALKDADVEADEVLEVVMVGGSTRTLLVREMVGEFFGRTPLTNINPDEVVAIGAGIQADILAGNKPDSEMLLLDVIPLSLGIETMGGLVEKIIPRNTTIPVARAQEFTTFKDGQTAMSVHIVQGEREMVDDCRSLARFSLKGIPPMAAGAAHIRVTYQVDADGLLSVTAMEKSTGVQSEIQVKPSYGLSDDEVANMLRDSMTYAKEDMQARALAEQRVEADRVIEGLIAAMQADGDELLSEAEKATLLQAIESLIELRNGNEANAIEQGIKDTDKASQDFASRRMDKSIRAALAGQSIDTI</sequence>
<proteinExistence type="inferred from homology"/>
<name>HSCA_VIBVU</name>
<organism>
    <name type="scientific">Vibrio vulnificus (strain CMCP6)</name>
    <dbReference type="NCBI Taxonomy" id="216895"/>
    <lineage>
        <taxon>Bacteria</taxon>
        <taxon>Pseudomonadati</taxon>
        <taxon>Pseudomonadota</taxon>
        <taxon>Gammaproteobacteria</taxon>
        <taxon>Vibrionales</taxon>
        <taxon>Vibrionaceae</taxon>
        <taxon>Vibrio</taxon>
    </lineage>
</organism>
<gene>
    <name evidence="2" type="primary">hscA</name>
    <name type="ordered locus">VV1_0434</name>
</gene>
<protein>
    <recommendedName>
        <fullName evidence="2">Chaperone protein HscA homolog</fullName>
    </recommendedName>
</protein>
<reference key="1">
    <citation type="submission" date="2002-12" db="EMBL/GenBank/DDBJ databases">
        <title>Complete genome sequence of Vibrio vulnificus CMCP6.</title>
        <authorList>
            <person name="Rhee J.H."/>
            <person name="Kim S.Y."/>
            <person name="Chung S.S."/>
            <person name="Kim J.J."/>
            <person name="Moon Y.H."/>
            <person name="Jeong H."/>
            <person name="Choy H.E."/>
        </authorList>
    </citation>
    <scope>NUCLEOTIDE SEQUENCE [LARGE SCALE GENOMIC DNA]</scope>
    <source>
        <strain>CMCP6</strain>
    </source>
</reference>